<feature type="transit peptide" description="Mitochondrion" evidence="28">
    <location>
        <begin position="1"/>
        <end position="28"/>
    </location>
</feature>
<feature type="chain" id="PRO_0000010355" description="Succinate dehydrogenase [ubiquinone] iron-sulfur subunit, mitochondrial">
    <location>
        <begin position="29"/>
        <end position="280"/>
    </location>
</feature>
<feature type="domain" description="2Fe-2S ferredoxin-type" evidence="3">
    <location>
        <begin position="40"/>
        <end position="133"/>
    </location>
</feature>
<feature type="domain" description="4Fe-4S ferredoxin-type" evidence="4">
    <location>
        <begin position="176"/>
        <end position="206"/>
    </location>
</feature>
<feature type="region of interest" description="Interaction with SDHAF1" evidence="20">
    <location>
        <begin position="146"/>
        <end position="218"/>
    </location>
</feature>
<feature type="binding site" evidence="25 27">
    <location>
        <position position="93"/>
    </location>
    <ligand>
        <name>[2Fe-2S] cluster</name>
        <dbReference type="ChEBI" id="CHEBI:190135"/>
    </ligand>
</feature>
<feature type="binding site" evidence="25 27">
    <location>
        <position position="98"/>
    </location>
    <ligand>
        <name>[2Fe-2S] cluster</name>
        <dbReference type="ChEBI" id="CHEBI:190135"/>
    </ligand>
</feature>
<feature type="binding site" evidence="25 27">
    <location>
        <position position="101"/>
    </location>
    <ligand>
        <name>[2Fe-2S] cluster</name>
        <dbReference type="ChEBI" id="CHEBI:190135"/>
    </ligand>
</feature>
<feature type="binding site" evidence="25 27">
    <location>
        <position position="113"/>
    </location>
    <ligand>
        <name>[2Fe-2S] cluster</name>
        <dbReference type="ChEBI" id="CHEBI:190135"/>
    </ligand>
</feature>
<feature type="binding site" evidence="25 27">
    <location>
        <position position="186"/>
    </location>
    <ligand>
        <name>[4Fe-4S] cluster</name>
        <dbReference type="ChEBI" id="CHEBI:49883"/>
    </ligand>
</feature>
<feature type="binding site" evidence="25 27">
    <location>
        <position position="189"/>
    </location>
    <ligand>
        <name>[4Fe-4S] cluster</name>
        <dbReference type="ChEBI" id="CHEBI:49883"/>
    </ligand>
</feature>
<feature type="binding site" evidence="25 27">
    <location>
        <position position="192"/>
    </location>
    <ligand>
        <name>[4Fe-4S] cluster</name>
        <dbReference type="ChEBI" id="CHEBI:49883"/>
    </ligand>
</feature>
<feature type="binding site" evidence="25 27">
    <location>
        <position position="196"/>
    </location>
    <ligand>
        <name>[3Fe-4S] cluster</name>
        <dbReference type="ChEBI" id="CHEBI:21137"/>
    </ligand>
</feature>
<feature type="binding site" evidence="25 27">
    <location>
        <position position="201"/>
    </location>
    <ligand>
        <name>a ubiquinone</name>
        <dbReference type="ChEBI" id="CHEBI:16389"/>
        <note>ligand shared with DHSD</note>
    </ligand>
</feature>
<feature type="binding site" evidence="25 27">
    <location>
        <position position="243"/>
    </location>
    <ligand>
        <name>[3Fe-4S] cluster</name>
        <dbReference type="ChEBI" id="CHEBI:21137"/>
    </ligand>
</feature>
<feature type="binding site" evidence="25 27">
    <location>
        <position position="249"/>
    </location>
    <ligand>
        <name>[3Fe-4S] cluster</name>
        <dbReference type="ChEBI" id="CHEBI:21137"/>
    </ligand>
</feature>
<feature type="binding site" evidence="25 27">
    <location>
        <position position="253"/>
    </location>
    <ligand>
        <name>[4Fe-4S] cluster</name>
        <dbReference type="ChEBI" id="CHEBI:49883"/>
    </ligand>
</feature>
<feature type="modified residue" description="N6-acetyllysine" evidence="2">
    <location>
        <position position="51"/>
    </location>
</feature>
<feature type="modified residue" description="N6-acetyllysine" evidence="2">
    <location>
        <position position="55"/>
    </location>
</feature>
<feature type="sequence variant" id="VAR_054374" description="Found in a patient with a Cowden-like phenotype; uncertain significance; patient cells have increased manganese superoxide dismutase expression and normal levels of reactive oxygen species; 1.2-fold increase in AKT expression and 1.3-fold change in MAPK expression in patient cells; dbSNP:rs11203289." evidence="17">
    <original>A</original>
    <variation>G</variation>
    <location>
        <position position="3"/>
    </location>
</feature>
<feature type="sequence variant" id="VAR_035063" description="In PPGL4." evidence="7">
    <original>A</original>
    <variation>AQ</variation>
    <location>
        <position position="29"/>
    </location>
</feature>
<feature type="sequence variant" id="VAR_054375" evidence="14">
    <original>K</original>
    <variation>E</variation>
    <location>
        <position position="40"/>
    </location>
</feature>
<feature type="sequence variant" id="VAR_054376" description="In PPGL4." evidence="10">
    <original>A</original>
    <variation>P</variation>
    <location>
        <position position="43"/>
    </location>
</feature>
<feature type="sequence variant" id="VAR_035064" description="In PPGL4; dbSNP:rs74315370." evidence="7 10 13">
    <original>R</original>
    <variation>G</variation>
    <location>
        <position position="46"/>
    </location>
</feature>
<feature type="sequence variant" id="VAR_054377" description="In PPGL4; dbSNP:rs772551056." evidence="9 10 13">
    <original>R</original>
    <variation>Q</variation>
    <location>
        <position position="46"/>
    </location>
</feature>
<feature type="sequence variant" id="VAR_085398" description="In MC2DN4; decreased succinate dehydrogenase (ubiquinone) activity in homozygous patient cells; decreased protein levels in homozygous patient cells; dbSNP:rs202101384." evidence="18 19 21 22">
    <original>D</original>
    <variation>V</variation>
    <location>
        <position position="48"/>
    </location>
</feature>
<feature type="sequence variant" id="VAR_054378" description="In PPGL4; dbSNP:rs1570958009." evidence="13">
    <original>G</original>
    <variation>R</variation>
    <location>
        <position position="53"/>
    </location>
</feature>
<feature type="sequence variant" id="VAR_054379" description="In PPGL4; dbSNP:rs876659329." evidence="9">
    <original>L</original>
    <variation>H</variation>
    <location>
        <position position="65"/>
    </location>
</feature>
<feature type="sequence variant" id="VAR_054380" description="In PPGL4; dbSNP:rs876659329." evidence="13">
    <original>L</original>
    <variation>P</variation>
    <location>
        <position position="65"/>
    </location>
</feature>
<feature type="sequence variant" id="VAR_018517" description="In PPGL4; dbSNP:rs727504457." evidence="5 13">
    <original>L</original>
    <variation>S</variation>
    <location>
        <position position="87"/>
    </location>
</feature>
<feature type="sequence variant" id="VAR_037620" description="In PPGL4; absence of expression in tumor cells indicating complete loss of SDHB function; dbSNP:rs121917755." evidence="15">
    <original>S</original>
    <variation>F</variation>
    <location>
        <position position="100"/>
    </location>
</feature>
<feature type="sequence variant" id="VAR_035065" description="In PPGL4; dbSNP:rs74315371." evidence="7 13">
    <original>C</original>
    <variation>Y</variation>
    <location>
        <position position="101"/>
    </location>
</feature>
<feature type="sequence variant" id="VAR_085399" description="In MC2DN4; uncertain significance; dbSNP:rs777578399." evidence="23">
    <original>A</original>
    <variation>T</variation>
    <location>
        <position position="102"/>
    </location>
</feature>
<feature type="sequence variant" id="VAR_085400" description="In MC2DN4; dbSNP:rs1553177765." evidence="19">
    <original>M</original>
    <variation>T</variation>
    <location>
        <position position="103"/>
    </location>
</feature>
<feature type="sequence variant" id="VAR_054381" description="In PPGL4." evidence="12">
    <original>I</original>
    <variation>N</variation>
    <location>
        <position position="127"/>
    </location>
</feature>
<feature type="sequence variant" id="VAR_018518" description="In PPGL4." evidence="6">
    <original>P</original>
    <variation>R</variation>
    <location>
        <position position="131"/>
    </location>
</feature>
<feature type="sequence variant" id="VAR_037621" description="In PPGL4; dbSNP:rs74315372." evidence="11">
    <original>H</original>
    <variation>P</variation>
    <location>
        <position position="132"/>
    </location>
</feature>
<feature type="sequence variant" id="VAR_054382" description="Found in a patient with a Cowden-like phenotype; uncertain significance; patient cells have increased manganese superoxide dismutase expression and increased levels of reactive oxygen species; 2.7-fold increase in AKT expression and a 1.7-fold increase in MAPK expression; dbSNP:rs33927012." evidence="17">
    <original>S</original>
    <variation>P</variation>
    <location>
        <position position="163"/>
    </location>
</feature>
<feature type="sequence variant" id="VAR_035066" description="In PPGL4; dbSNP:rs786202732." evidence="7 13">
    <original>C</original>
    <variation>R</variation>
    <location>
        <position position="192"/>
    </location>
</feature>
<feature type="sequence variant" id="VAR_035067" description="In PPGL4; dbSNP:rs876658367." evidence="7 13">
    <original>C</original>
    <variation>Y</variation>
    <location>
        <position position="196"/>
    </location>
</feature>
<feature type="sequence variant" id="VAR_017868" description="In PPGL4; dbSNP:rs74315367." evidence="5 12">
    <original>P</original>
    <variation>R</variation>
    <location>
        <position position="197"/>
    </location>
</feature>
<feature type="sequence variant" id="VAR_054383" description="In PPGL4; dbSNP:rs138996609." evidence="10">
    <original>R</original>
    <variation>C</variation>
    <location>
        <position position="230"/>
    </location>
</feature>
<feature type="sequence variant" id="VAR_085401" description="In MC2DN4; dbSNP:rs587782604." evidence="22">
    <original>R</original>
    <variation>H</variation>
    <location>
        <position position="230"/>
    </location>
</feature>
<feature type="sequence variant" id="VAR_017869" description="In PPGL4; dbSNP:rs74315368." evidence="7 8 13">
    <original>R</original>
    <variation>H</variation>
    <location>
        <position position="242"/>
    </location>
</feature>
<feature type="sequence variant" id="VAR_085402" description="In MC2DN4; decreased succinate dehydrogenase (ubiquinone) activity; decreased protein levels in homozygous patient cells; dbSNP:rs761350633." evidence="22">
    <original>L</original>
    <variation>V</variation>
    <location>
        <position position="257"/>
    </location>
</feature>
<feature type="sequence conflict" description="In Ref. 7; AAA35708/BAA01089." evidence="26" ref="7">
    <original>GGA</original>
    <variation>WRT</variation>
    <location>
        <begin position="19"/>
        <end position="21"/>
    </location>
</feature>
<feature type="sequence conflict" description="In Ref. 1; AAA81167 and 7; AAA35708/BAA01089." evidence="26" ref="1 7">
    <original>E</original>
    <variation>K</variation>
    <location>
        <position position="62"/>
    </location>
</feature>
<feature type="sequence conflict" description="In Ref. 1; AAA80581." evidence="26" ref="1">
    <original>K</original>
    <variation>NR</variation>
    <location>
        <position position="67"/>
    </location>
</feature>
<feature type="sequence conflict" description="In Ref. 8; no nucleotide entry." evidence="26" ref="8">
    <original>K</original>
    <variation>R</variation>
    <location>
        <position position="151"/>
    </location>
</feature>
<feature type="sequence conflict" description="In Ref. 8; no nucleotide entry." evidence="26" ref="8">
    <original>Q</original>
    <variation>E</variation>
    <location>
        <position position="172"/>
    </location>
</feature>
<feature type="strand" evidence="30">
    <location>
        <begin position="39"/>
        <end position="46"/>
    </location>
</feature>
<feature type="strand" evidence="30">
    <location>
        <begin position="49"/>
        <end position="51"/>
    </location>
</feature>
<feature type="strand" evidence="30">
    <location>
        <begin position="57"/>
        <end position="68"/>
    </location>
</feature>
<feature type="helix" evidence="30">
    <location>
        <begin position="72"/>
        <end position="82"/>
    </location>
</feature>
<feature type="strand" evidence="30">
    <location>
        <begin position="94"/>
        <end position="98"/>
    </location>
</feature>
<feature type="strand" evidence="30">
    <location>
        <begin position="101"/>
        <end position="105"/>
    </location>
</feature>
<feature type="strand" evidence="30">
    <location>
        <begin position="108"/>
        <end position="111"/>
    </location>
</feature>
<feature type="turn" evidence="30">
    <location>
        <begin position="112"/>
        <end position="114"/>
    </location>
</feature>
<feature type="strand" evidence="29">
    <location>
        <begin position="121"/>
        <end position="123"/>
    </location>
</feature>
<feature type="strand" evidence="30">
    <location>
        <begin position="124"/>
        <end position="128"/>
    </location>
</feature>
<feature type="strand" evidence="29">
    <location>
        <begin position="130"/>
        <end position="132"/>
    </location>
</feature>
<feature type="strand" evidence="30">
    <location>
        <begin position="133"/>
        <end position="137"/>
    </location>
</feature>
<feature type="helix" evidence="30">
    <location>
        <begin position="144"/>
        <end position="152"/>
    </location>
</feature>
<feature type="turn" evidence="30">
    <location>
        <begin position="163"/>
        <end position="167"/>
    </location>
</feature>
<feature type="helix" evidence="30">
    <location>
        <begin position="174"/>
        <end position="177"/>
    </location>
</feature>
<feature type="helix" evidence="30">
    <location>
        <begin position="178"/>
        <end position="180"/>
    </location>
</feature>
<feature type="turn" evidence="30">
    <location>
        <begin position="181"/>
        <end position="185"/>
    </location>
</feature>
<feature type="helix" evidence="30">
    <location>
        <begin position="193"/>
        <end position="195"/>
    </location>
</feature>
<feature type="helix" evidence="30">
    <location>
        <begin position="197"/>
        <end position="201"/>
    </location>
</feature>
<feature type="turn" evidence="30">
    <location>
        <begin position="203"/>
        <end position="205"/>
    </location>
</feature>
<feature type="helix" evidence="30">
    <location>
        <begin position="208"/>
        <end position="219"/>
    </location>
</feature>
<feature type="turn" evidence="30">
    <location>
        <begin position="227"/>
        <end position="231"/>
    </location>
</feature>
<feature type="helix" evidence="30">
    <location>
        <begin position="232"/>
        <end position="234"/>
    </location>
</feature>
<feature type="turn" evidence="30">
    <location>
        <begin position="237"/>
        <end position="242"/>
    </location>
</feature>
<feature type="helix" evidence="30">
    <location>
        <begin position="248"/>
        <end position="252"/>
    </location>
</feature>
<feature type="helix" evidence="30">
    <location>
        <begin position="259"/>
        <end position="271"/>
    </location>
</feature>
<reference key="1">
    <citation type="journal article" date="1995" name="Gene">
        <title>Structural organization of the gene encoding the human iron-sulfur subunit of succinate dehydrogenase.</title>
        <authorList>
            <person name="Au H.C."/>
            <person name="Ream-Robinson D."/>
            <person name="Bellew L.A."/>
            <person name="Broomfield P.L.E."/>
            <person name="Saghbini M."/>
            <person name="Scheffler I.E."/>
        </authorList>
    </citation>
    <scope>NUCLEOTIDE SEQUENCE [GENOMIC DNA / MRNA]</scope>
    <source>
        <tissue>Liver</tissue>
    </source>
</reference>
<reference key="2">
    <citation type="journal article" date="2004" name="Nat. Genet.">
        <title>Complete sequencing and characterization of 21,243 full-length human cDNAs.</title>
        <authorList>
            <person name="Ota T."/>
            <person name="Suzuki Y."/>
            <person name="Nishikawa T."/>
            <person name="Otsuki T."/>
            <person name="Sugiyama T."/>
            <person name="Irie R."/>
            <person name="Wakamatsu A."/>
            <person name="Hayashi K."/>
            <person name="Sato H."/>
            <person name="Nagai K."/>
            <person name="Kimura K."/>
            <person name="Makita H."/>
            <person name="Sekine M."/>
            <person name="Obayashi M."/>
            <person name="Nishi T."/>
            <person name="Shibahara T."/>
            <person name="Tanaka T."/>
            <person name="Ishii S."/>
            <person name="Yamamoto J."/>
            <person name="Saito K."/>
            <person name="Kawai Y."/>
            <person name="Isono Y."/>
            <person name="Nakamura Y."/>
            <person name="Nagahari K."/>
            <person name="Murakami K."/>
            <person name="Yasuda T."/>
            <person name="Iwayanagi T."/>
            <person name="Wagatsuma M."/>
            <person name="Shiratori A."/>
            <person name="Sudo H."/>
            <person name="Hosoiri T."/>
            <person name="Kaku Y."/>
            <person name="Kodaira H."/>
            <person name="Kondo H."/>
            <person name="Sugawara M."/>
            <person name="Takahashi M."/>
            <person name="Kanda K."/>
            <person name="Yokoi T."/>
            <person name="Furuya T."/>
            <person name="Kikkawa E."/>
            <person name="Omura Y."/>
            <person name="Abe K."/>
            <person name="Kamihara K."/>
            <person name="Katsuta N."/>
            <person name="Sato K."/>
            <person name="Tanikawa M."/>
            <person name="Yamazaki M."/>
            <person name="Ninomiya K."/>
            <person name="Ishibashi T."/>
            <person name="Yamashita H."/>
            <person name="Murakawa K."/>
            <person name="Fujimori K."/>
            <person name="Tanai H."/>
            <person name="Kimata M."/>
            <person name="Watanabe M."/>
            <person name="Hiraoka S."/>
            <person name="Chiba Y."/>
            <person name="Ishida S."/>
            <person name="Ono Y."/>
            <person name="Takiguchi S."/>
            <person name="Watanabe S."/>
            <person name="Yosida M."/>
            <person name="Hotuta T."/>
            <person name="Kusano J."/>
            <person name="Kanehori K."/>
            <person name="Takahashi-Fujii A."/>
            <person name="Hara H."/>
            <person name="Tanase T.-O."/>
            <person name="Nomura Y."/>
            <person name="Togiya S."/>
            <person name="Komai F."/>
            <person name="Hara R."/>
            <person name="Takeuchi K."/>
            <person name="Arita M."/>
            <person name="Imose N."/>
            <person name="Musashino K."/>
            <person name="Yuuki H."/>
            <person name="Oshima A."/>
            <person name="Sasaki N."/>
            <person name="Aotsuka S."/>
            <person name="Yoshikawa Y."/>
            <person name="Matsunawa H."/>
            <person name="Ichihara T."/>
            <person name="Shiohata N."/>
            <person name="Sano S."/>
            <person name="Moriya S."/>
            <person name="Momiyama H."/>
            <person name="Satoh N."/>
            <person name="Takami S."/>
            <person name="Terashima Y."/>
            <person name="Suzuki O."/>
            <person name="Nakagawa S."/>
            <person name="Senoh A."/>
            <person name="Mizoguchi H."/>
            <person name="Goto Y."/>
            <person name="Shimizu F."/>
            <person name="Wakebe H."/>
            <person name="Hishigaki H."/>
            <person name="Watanabe T."/>
            <person name="Sugiyama A."/>
            <person name="Takemoto M."/>
            <person name="Kawakami B."/>
            <person name="Yamazaki M."/>
            <person name="Watanabe K."/>
            <person name="Kumagai A."/>
            <person name="Itakura S."/>
            <person name="Fukuzumi Y."/>
            <person name="Fujimori Y."/>
            <person name="Komiyama M."/>
            <person name="Tashiro H."/>
            <person name="Tanigami A."/>
            <person name="Fujiwara T."/>
            <person name="Ono T."/>
            <person name="Yamada K."/>
            <person name="Fujii Y."/>
            <person name="Ozaki K."/>
            <person name="Hirao M."/>
            <person name="Ohmori Y."/>
            <person name="Kawabata A."/>
            <person name="Hikiji T."/>
            <person name="Kobatake N."/>
            <person name="Inagaki H."/>
            <person name="Ikema Y."/>
            <person name="Okamoto S."/>
            <person name="Okitani R."/>
            <person name="Kawakami T."/>
            <person name="Noguchi S."/>
            <person name="Itoh T."/>
            <person name="Shigeta K."/>
            <person name="Senba T."/>
            <person name="Matsumura K."/>
            <person name="Nakajima Y."/>
            <person name="Mizuno T."/>
            <person name="Morinaga M."/>
            <person name="Sasaki M."/>
            <person name="Togashi T."/>
            <person name="Oyama M."/>
            <person name="Hata H."/>
            <person name="Watanabe M."/>
            <person name="Komatsu T."/>
            <person name="Mizushima-Sugano J."/>
            <person name="Satoh T."/>
            <person name="Shirai Y."/>
            <person name="Takahashi Y."/>
            <person name="Nakagawa K."/>
            <person name="Okumura K."/>
            <person name="Nagase T."/>
            <person name="Nomura N."/>
            <person name="Kikuchi H."/>
            <person name="Masuho Y."/>
            <person name="Yamashita R."/>
            <person name="Nakai K."/>
            <person name="Yada T."/>
            <person name="Nakamura Y."/>
            <person name="Ohara O."/>
            <person name="Isogai T."/>
            <person name="Sugano S."/>
        </authorList>
    </citation>
    <scope>NUCLEOTIDE SEQUENCE [LARGE SCALE MRNA]</scope>
    <source>
        <tissue>Uterus</tissue>
    </source>
</reference>
<reference key="3">
    <citation type="journal article" date="2006" name="Nature">
        <title>The DNA sequence and biological annotation of human chromosome 1.</title>
        <authorList>
            <person name="Gregory S.G."/>
            <person name="Barlow K.F."/>
            <person name="McLay K.E."/>
            <person name="Kaul R."/>
            <person name="Swarbreck D."/>
            <person name="Dunham A."/>
            <person name="Scott C.E."/>
            <person name="Howe K.L."/>
            <person name="Woodfine K."/>
            <person name="Spencer C.C.A."/>
            <person name="Jones M.C."/>
            <person name="Gillson C."/>
            <person name="Searle S."/>
            <person name="Zhou Y."/>
            <person name="Kokocinski F."/>
            <person name="McDonald L."/>
            <person name="Evans R."/>
            <person name="Phillips K."/>
            <person name="Atkinson A."/>
            <person name="Cooper R."/>
            <person name="Jones C."/>
            <person name="Hall R.E."/>
            <person name="Andrews T.D."/>
            <person name="Lloyd C."/>
            <person name="Ainscough R."/>
            <person name="Almeida J.P."/>
            <person name="Ambrose K.D."/>
            <person name="Anderson F."/>
            <person name="Andrew R.W."/>
            <person name="Ashwell R.I.S."/>
            <person name="Aubin K."/>
            <person name="Babbage A.K."/>
            <person name="Bagguley C.L."/>
            <person name="Bailey J."/>
            <person name="Beasley H."/>
            <person name="Bethel G."/>
            <person name="Bird C.P."/>
            <person name="Bray-Allen S."/>
            <person name="Brown J.Y."/>
            <person name="Brown A.J."/>
            <person name="Buckley D."/>
            <person name="Burton J."/>
            <person name="Bye J."/>
            <person name="Carder C."/>
            <person name="Chapman J.C."/>
            <person name="Clark S.Y."/>
            <person name="Clarke G."/>
            <person name="Clee C."/>
            <person name="Cobley V."/>
            <person name="Collier R.E."/>
            <person name="Corby N."/>
            <person name="Coville G.J."/>
            <person name="Davies J."/>
            <person name="Deadman R."/>
            <person name="Dunn M."/>
            <person name="Earthrowl M."/>
            <person name="Ellington A.G."/>
            <person name="Errington H."/>
            <person name="Frankish A."/>
            <person name="Frankland J."/>
            <person name="French L."/>
            <person name="Garner P."/>
            <person name="Garnett J."/>
            <person name="Gay L."/>
            <person name="Ghori M.R.J."/>
            <person name="Gibson R."/>
            <person name="Gilby L.M."/>
            <person name="Gillett W."/>
            <person name="Glithero R.J."/>
            <person name="Grafham D.V."/>
            <person name="Griffiths C."/>
            <person name="Griffiths-Jones S."/>
            <person name="Grocock R."/>
            <person name="Hammond S."/>
            <person name="Harrison E.S.I."/>
            <person name="Hart E."/>
            <person name="Haugen E."/>
            <person name="Heath P.D."/>
            <person name="Holmes S."/>
            <person name="Holt K."/>
            <person name="Howden P.J."/>
            <person name="Hunt A.R."/>
            <person name="Hunt S.E."/>
            <person name="Hunter G."/>
            <person name="Isherwood J."/>
            <person name="James R."/>
            <person name="Johnson C."/>
            <person name="Johnson D."/>
            <person name="Joy A."/>
            <person name="Kay M."/>
            <person name="Kershaw J.K."/>
            <person name="Kibukawa M."/>
            <person name="Kimberley A.M."/>
            <person name="King A."/>
            <person name="Knights A.J."/>
            <person name="Lad H."/>
            <person name="Laird G."/>
            <person name="Lawlor S."/>
            <person name="Leongamornlert D.A."/>
            <person name="Lloyd D.M."/>
            <person name="Loveland J."/>
            <person name="Lovell J."/>
            <person name="Lush M.J."/>
            <person name="Lyne R."/>
            <person name="Martin S."/>
            <person name="Mashreghi-Mohammadi M."/>
            <person name="Matthews L."/>
            <person name="Matthews N.S.W."/>
            <person name="McLaren S."/>
            <person name="Milne S."/>
            <person name="Mistry S."/>
            <person name="Moore M.J.F."/>
            <person name="Nickerson T."/>
            <person name="O'Dell C.N."/>
            <person name="Oliver K."/>
            <person name="Palmeiri A."/>
            <person name="Palmer S.A."/>
            <person name="Parker A."/>
            <person name="Patel D."/>
            <person name="Pearce A.V."/>
            <person name="Peck A.I."/>
            <person name="Pelan S."/>
            <person name="Phelps K."/>
            <person name="Phillimore B.J."/>
            <person name="Plumb R."/>
            <person name="Rajan J."/>
            <person name="Raymond C."/>
            <person name="Rouse G."/>
            <person name="Saenphimmachak C."/>
            <person name="Sehra H.K."/>
            <person name="Sheridan E."/>
            <person name="Shownkeen R."/>
            <person name="Sims S."/>
            <person name="Skuce C.D."/>
            <person name="Smith M."/>
            <person name="Steward C."/>
            <person name="Subramanian S."/>
            <person name="Sycamore N."/>
            <person name="Tracey A."/>
            <person name="Tromans A."/>
            <person name="Van Helmond Z."/>
            <person name="Wall M."/>
            <person name="Wallis J.M."/>
            <person name="White S."/>
            <person name="Whitehead S.L."/>
            <person name="Wilkinson J.E."/>
            <person name="Willey D.L."/>
            <person name="Williams H."/>
            <person name="Wilming L."/>
            <person name="Wray P.W."/>
            <person name="Wu Z."/>
            <person name="Coulson A."/>
            <person name="Vaudin M."/>
            <person name="Sulston J.E."/>
            <person name="Durbin R.M."/>
            <person name="Hubbard T."/>
            <person name="Wooster R."/>
            <person name="Dunham I."/>
            <person name="Carter N.P."/>
            <person name="McVean G."/>
            <person name="Ross M.T."/>
            <person name="Harrow J."/>
            <person name="Olson M.V."/>
            <person name="Beck S."/>
            <person name="Rogers J."/>
            <person name="Bentley D.R."/>
        </authorList>
    </citation>
    <scope>NUCLEOTIDE SEQUENCE [LARGE SCALE GENOMIC DNA]</scope>
</reference>
<reference key="4">
    <citation type="submission" date="2005-07" db="EMBL/GenBank/DDBJ databases">
        <authorList>
            <person name="Mural R.J."/>
            <person name="Istrail S."/>
            <person name="Sutton G.G."/>
            <person name="Florea L."/>
            <person name="Halpern A.L."/>
            <person name="Mobarry C.M."/>
            <person name="Lippert R."/>
            <person name="Walenz B."/>
            <person name="Shatkay H."/>
            <person name="Dew I."/>
            <person name="Miller J.R."/>
            <person name="Flanigan M.J."/>
            <person name="Edwards N.J."/>
            <person name="Bolanos R."/>
            <person name="Fasulo D."/>
            <person name="Halldorsson B.V."/>
            <person name="Hannenhalli S."/>
            <person name="Turner R."/>
            <person name="Yooseph S."/>
            <person name="Lu F."/>
            <person name="Nusskern D.R."/>
            <person name="Shue B.C."/>
            <person name="Zheng X.H."/>
            <person name="Zhong F."/>
            <person name="Delcher A.L."/>
            <person name="Huson D.H."/>
            <person name="Kravitz S.A."/>
            <person name="Mouchard L."/>
            <person name="Reinert K."/>
            <person name="Remington K.A."/>
            <person name="Clark A.G."/>
            <person name="Waterman M.S."/>
            <person name="Eichler E.E."/>
            <person name="Adams M.D."/>
            <person name="Hunkapiller M.W."/>
            <person name="Myers E.W."/>
            <person name="Venter J.C."/>
        </authorList>
    </citation>
    <scope>NUCLEOTIDE SEQUENCE [LARGE SCALE GENOMIC DNA]</scope>
</reference>
<reference key="5">
    <citation type="journal article" date="2004" name="Genome Res.">
        <title>The status, quality, and expansion of the NIH full-length cDNA project: the Mammalian Gene Collection (MGC).</title>
        <authorList>
            <consortium name="The MGC Project Team"/>
        </authorList>
    </citation>
    <scope>NUCLEOTIDE SEQUENCE [LARGE SCALE MRNA]</scope>
    <source>
        <tissue>Brain</tissue>
    </source>
</reference>
<reference key="6">
    <citation type="journal article" date="2006" name="Mol. Biol. Evol.">
        <title>Housekeeping genes for phylogenetic analysis of eutherian relationships.</title>
        <authorList>
            <person name="Kullberg M."/>
            <person name="Nilsson M.A."/>
            <person name="Arnason U."/>
            <person name="Harley E.H."/>
            <person name="Janke A."/>
        </authorList>
    </citation>
    <scope>NUCLEOTIDE SEQUENCE [MRNA] OF 10-264</scope>
</reference>
<reference key="7">
    <citation type="journal article" date="1990" name="Biochem. Biophys. Res. Commun.">
        <title>Human complex II (succinate-ubiquinone oxidoreductase): cDNA cloning of iron sulfur (Ip) subunit of liver mitochondria.</title>
        <authorList>
            <person name="Kita K."/>
            <person name="Oya H."/>
            <person name="Gennis R.B."/>
            <person name="Ackrell B.A.C."/>
            <person name="Kasahara M."/>
        </authorList>
    </citation>
    <scope>NUCLEOTIDE SEQUENCE [MRNA] OF 19-280</scope>
    <source>
        <tissue>Liver</tissue>
    </source>
</reference>
<reference key="8">
    <citation type="journal article" date="1989" name="Proc. Natl. Acad. Sci. U.S.A.">
        <title>Use of the DNA polymerase chain reaction for homology probing: isolation of partial cDNA or genomic clones encoding the iron-sulfur protein of succinate dehydrogenase from several species.</title>
        <authorList>
            <person name="Gould S.J."/>
            <person name="Subramani S."/>
            <person name="Scheffler I.E."/>
        </authorList>
    </citation>
    <scope>NUCLEOTIDE SEQUENCE [MRNA] OF 107-249</scope>
    <source>
        <tissue>Fibroblast</tissue>
    </source>
</reference>
<reference key="9">
    <citation type="journal article" date="1993" name="Proc. Natl. Acad. Sci. U.S.A.">
        <authorList>
            <person name="Gould S.J."/>
            <person name="Subramani S."/>
            <person name="Scheffler I.E."/>
        </authorList>
    </citation>
    <scope>ERRATUM OF PUBMED:2494655</scope>
</reference>
<reference key="10">
    <citation type="journal article" date="2011" name="BMC Syst. Biol.">
        <title>Initial characterization of the human central proteome.</title>
        <authorList>
            <person name="Burkard T.R."/>
            <person name="Planyavsky M."/>
            <person name="Kaupe I."/>
            <person name="Breitwieser F.P."/>
            <person name="Buerckstuemmer T."/>
            <person name="Bennett K.L."/>
            <person name="Superti-Furga G."/>
            <person name="Colinge J."/>
        </authorList>
    </citation>
    <scope>IDENTIFICATION BY MASS SPECTROMETRY [LARGE SCALE ANALYSIS]</scope>
</reference>
<reference key="11">
    <citation type="journal article" date="2014" name="J. Proteomics">
        <title>An enzyme assisted RP-RPLC approach for in-depth analysis of human liver phosphoproteome.</title>
        <authorList>
            <person name="Bian Y."/>
            <person name="Song C."/>
            <person name="Cheng K."/>
            <person name="Dong M."/>
            <person name="Wang F."/>
            <person name="Huang J."/>
            <person name="Sun D."/>
            <person name="Wang L."/>
            <person name="Ye M."/>
            <person name="Zou H."/>
        </authorList>
    </citation>
    <scope>IDENTIFICATION BY MASS SPECTROMETRY [LARGE SCALE ANALYSIS]</scope>
    <source>
        <tissue>Liver</tissue>
    </source>
</reference>
<reference key="12">
    <citation type="journal article" date="2015" name="Proteomics">
        <title>N-terminome analysis of the human mitochondrial proteome.</title>
        <authorList>
            <person name="Vaca Jacome A.S."/>
            <person name="Rabilloud T."/>
            <person name="Schaeffer-Reiss C."/>
            <person name="Rompais M."/>
            <person name="Ayoub D."/>
            <person name="Lane L."/>
            <person name="Bairoch A."/>
            <person name="Van Dorsselaer A."/>
            <person name="Carapito C."/>
        </authorList>
    </citation>
    <scope>CLEAVAGE OF TRANSIT PEPTIDE [LARGE SCALE ANALYSIS] AFTER GLY-28</scope>
    <scope>IDENTIFICATION BY MASS SPECTROMETRY [LARGE SCALE ANALYSIS]</scope>
</reference>
<reference key="13">
    <citation type="journal article" date="2016" name="Cell Metab.">
        <title>Disease-causing SDHAF1 mutations impair transfer of Fe-S clusters to SDHB.</title>
        <authorList>
            <person name="Maio N."/>
            <person name="Ghezzi D."/>
            <person name="Verrigni D."/>
            <person name="Rizza T."/>
            <person name="Bertini E."/>
            <person name="Martinelli D."/>
            <person name="Zeviani M."/>
            <person name="Singh A."/>
            <person name="Carrozzo R."/>
            <person name="Rouault T.A."/>
        </authorList>
    </citation>
    <scope>INTERACTION WITH SDHAF1</scope>
</reference>
<reference key="14">
    <citation type="journal article" date="2020" name="Viruses">
        <title>A Comprehensive Proteomics Analysis of the JC Virus (JCV) Large and Small Tumor Antigen Interacting Proteins: Large T Primarily Targets the Host Protein Complexes with V-ATPase and Ubiquitin Ligase Activities While Small t Mostly Associates with Those Having Phosphatase and Chromatin-Remodeling Functions.</title>
        <authorList>
            <person name="Saribas S."/>
            <person name="Safak M."/>
        </authorList>
    </citation>
    <scope>INTERACTION WITH JC VIRUS SMALL T ANTIGEN (MICROBIAL INFECTION)</scope>
</reference>
<reference evidence="27" key="15">
    <citation type="journal article" date="2023" name="Proc. Natl. Acad. Sci. U.S.A.">
        <title>Structure of the human respiratory complex II.</title>
        <authorList>
            <person name="Du Z."/>
            <person name="Zhou X."/>
            <person name="Lai Y."/>
            <person name="Xu J."/>
            <person name="Zhang Y."/>
            <person name="Zhou S."/>
            <person name="Feng Z."/>
            <person name="Yu L."/>
            <person name="Tang Y."/>
            <person name="Wang W."/>
            <person name="Yu L."/>
            <person name="Tian C."/>
            <person name="Ran T."/>
            <person name="Chen H."/>
            <person name="Guddat L.W."/>
            <person name="Liu F."/>
            <person name="Gao Y."/>
            <person name="Rao Z."/>
            <person name="Gong H."/>
        </authorList>
    </citation>
    <scope>STRUCTURE BY ELECTRON MICROSCOPY (2.86 ANGSTROMS) IN COMPLEX WITH IRON-SULFUR</scope>
    <scope>COFACTOR</scope>
    <scope>SUBUNIT</scope>
    <scope>SUBCELLULAR LOCATION</scope>
</reference>
<reference key="16">
    <citation type="journal article" date="2001" name="Am. J. Hum. Genet.">
        <title>Gene mutations in the succinate dehydrogenase subunit SDHB cause susceptibility to familial pheochromocytoma and to familial paraganglioma.</title>
        <authorList>
            <person name="Astuti D."/>
            <person name="Latif F."/>
            <person name="Dallol A."/>
            <person name="Dahia P.L.M."/>
            <person name="Douglas F."/>
            <person name="George E."/>
            <person name="Skoeldberg F."/>
            <person name="Husebye E.S."/>
            <person name="Eng C."/>
            <person name="Maher E.R."/>
        </authorList>
    </citation>
    <scope>VARIANTS PPGL4 SER-87 AND ARG-197</scope>
</reference>
<reference key="17">
    <citation type="journal article" date="2002" name="J. Clin. Endocrinol. Metab.">
        <title>Familial malignant catecholamine-secreting paraganglioma with prolonged survival associated with mutation in the succinate dehydrogenase B gene.</title>
        <authorList>
            <person name="Young A.L."/>
            <person name="Baysal B.E."/>
            <person name="Deb A."/>
            <person name="Young W.F. Jr."/>
        </authorList>
    </citation>
    <scope>VARIANT PPGL4 HIS-242</scope>
</reference>
<reference key="18">
    <citation type="journal article" date="2002" name="J. Med. Genet.">
        <title>Prevalence of SDHB, SDHC, and SDHD germline mutations in clinic patients with head and neck paragangliomas.</title>
        <authorList>
            <person name="Baysal B.E."/>
            <person name="Willett-Brozick J.E."/>
            <person name="Lawrence E.C."/>
            <person name="Drovdlic C.M."/>
            <person name="Savul S.A."/>
            <person name="McLeod D.R."/>
            <person name="Yee H.A."/>
            <person name="Brackmann D.E."/>
            <person name="Slattery W.H. III"/>
            <person name="Myers E.N."/>
            <person name="Ferrell R.E."/>
            <person name="Rubinstein W.S."/>
        </authorList>
    </citation>
    <scope>VARIANT PPGL4 ARG-131</scope>
</reference>
<reference key="19">
    <citation type="journal article" date="2002" name="N. Engl. J. Med.">
        <title>Germ-line mutations in nonsyndromic pheochromocytoma.</title>
        <authorList>
            <consortium name="The Freiburg-Warsaw-Columbus pheochromocytoma study group"/>
            <person name="Neumann H.P.H."/>
            <person name="Bausch B."/>
            <person name="McWhinney S.R."/>
            <person name="Bender B.U."/>
            <person name="Gimm O."/>
            <person name="Franke G."/>
            <person name="Schipper J."/>
            <person name="Klisch J."/>
            <person name="Altehoefer C."/>
            <person name="Zerres K."/>
            <person name="Januszewicz A."/>
            <person name="Smith W.M."/>
            <person name="Munk R."/>
            <person name="Manz T."/>
            <person name="Glaesker S."/>
            <person name="Apel T.W."/>
            <person name="Treier M."/>
            <person name="Reineke M."/>
            <person name="Walz M.K."/>
            <person name="Hoang-Vu C."/>
            <person name="Brauckhoff M."/>
            <person name="Klein-Franke A."/>
            <person name="Klose P."/>
            <person name="Schmidt H."/>
            <person name="Maier-Woelfle M."/>
            <person name="Peczkowska M."/>
            <person name="Szmigielski C."/>
            <person name="Eng C."/>
        </authorList>
    </citation>
    <scope>VARIANTS PPGL4 GLN-29 INS; GLY-46; TYR-101; ARG-192; TYR-196 AND HIS-242</scope>
</reference>
<reference key="20">
    <citation type="journal article" date="2003" name="Cancer Res.">
        <title>Mutations in the SDHB gene are associated with extra-adrenal and/or malignant phaeochromocytomas.</title>
        <authorList>
            <person name="Gimenez-Roqueplo A.-P."/>
            <person name="Favier J."/>
            <person name="Rustin P."/>
            <person name="Rieubland C."/>
            <person name="Crespin M."/>
            <person name="Nau V."/>
            <person name="Khau Van Kien P."/>
            <person name="Corvol P."/>
            <person name="Plouin P.-F."/>
            <person name="Jeunemaitre X."/>
        </authorList>
    </citation>
    <scope>VARIANTS PPGL4 PRO-43; GLN-46; GLY-46 AND CYS-230</scope>
</reference>
<reference key="21">
    <citation type="journal article" date="2003" name="Clin. Endocrinol. (Oxf.)">
        <title>Genetic analysis of mitochondrial complex II subunits SDHD, SDHB and SDHC in paraganglioma and phaeochromocytoma susceptibility.</title>
        <authorList>
            <person name="Astuti D."/>
            <person name="Hart-Holden N."/>
            <person name="Latif F."/>
            <person name="Lalloo F."/>
            <person name="Black G.C."/>
            <person name="Lim C."/>
            <person name="Moran A."/>
            <person name="Grossman A.B."/>
            <person name="Hodgson S.V."/>
            <person name="Freemont A."/>
            <person name="Ramsden R."/>
            <person name="Eng C."/>
            <person name="Evans D.G.R."/>
            <person name="Maher E.R."/>
        </authorList>
    </citation>
    <scope>VARIANTS PPGL4 ASN-127 AND ARG-197</scope>
</reference>
<reference key="22">
    <citation type="journal article" date="2003" name="Oncogene">
        <title>Novel succinate dehydrogenase subunit B (SDHB) mutations in familial phaeochromocytomas and paragangliomas, but an absence of somatic SDHB mutations in sporadic phaeochromocytomas.</title>
        <authorList>
            <person name="Benn D.E."/>
            <person name="Croxson M.S."/>
            <person name="Tucker K."/>
            <person name="Bambach C.P."/>
            <person name="Richardson A.L."/>
            <person name="Delbridge L."/>
            <person name="Pullan P.T."/>
            <person name="Hammond J."/>
            <person name="Marsh D.J."/>
            <person name="Robinson B.G."/>
        </authorList>
    </citation>
    <scope>VARIANTS PPGL4 GLN-46 AND HIS-65</scope>
</reference>
<reference key="23">
    <citation type="journal article" date="2004" name="Clin. Endocrinol. (Oxf.)">
        <title>K40E: a novel succinate dehydrogenase (SDH)B mutation causing familial phaeochromocytoma and paraganglioma.</title>
        <authorList>
            <person name="McDonnell C.M."/>
            <person name="Benn D.E."/>
            <person name="Marsh D.J."/>
            <person name="Robinson B.G."/>
            <person name="Zacharin M.R."/>
        </authorList>
    </citation>
    <scope>VARIANT GLU-40</scope>
</reference>
<reference key="24">
    <citation type="journal article" date="2004" name="JAMA">
        <title>Distinct clinical features of paraganglioma syndromes associated with SDHB and SDHD gene mutations.</title>
        <authorList>
            <person name="Neumann H.P.H."/>
            <person name="Pawlu C."/>
            <person name="Peczkowska M."/>
            <person name="Bausch B."/>
            <person name="McWhinney S.R."/>
            <person name="Muresan M."/>
            <person name="Buchta M."/>
            <person name="Franke G."/>
            <person name="Klisch J."/>
            <person name="Bley T.A."/>
            <person name="Hoegerle S."/>
            <person name="Boedeker C.C."/>
            <person name="Opocher G."/>
            <person name="Schipper J."/>
            <person name="Januszewicz A."/>
            <person name="Eng C."/>
        </authorList>
    </citation>
    <scope>VARIANTS PPGL4 GLY-46; GLN-46; ARG-53; PRO-65; SER-87; TYR-101; ARG-192; TYR-196 AND HIS-242</scope>
</reference>
<reference key="25">
    <citation type="journal article" date="2004" name="JAMA">
        <authorList>
            <person name="Neumann H.P.H."/>
            <person name="Pawlu C."/>
            <person name="Peczkowska M."/>
            <person name="Bausch B."/>
            <person name="McWhinney S.R."/>
            <person name="Muresan M."/>
            <person name="Buchta M."/>
            <person name="Franke G."/>
            <person name="Klisch J."/>
            <person name="Bley T.A."/>
            <person name="Hoegerle S."/>
            <person name="Boedeker C.C."/>
            <person name="Opocher G."/>
            <person name="Schipper J."/>
            <person name="Januszewicz A."/>
            <person name="Eng C."/>
        </authorList>
    </citation>
    <scope>ERRATUM OF PUBMED:15328326</scope>
</reference>
<reference key="26">
    <citation type="journal article" date="2004" name="J. Clin. Endocrinol. Metab.">
        <title>A novel succinate dehydrogenase subunit B gene mutation, H132P, causes familial malignant sympathetic extraadrenal paragangliomas.</title>
        <authorList>
            <person name="Maier-Woelfle M."/>
            <person name="Braendle M."/>
            <person name="Komminoth P."/>
            <person name="Saremaslani P."/>
            <person name="Schmid S."/>
            <person name="Locher T."/>
            <person name="Heitz P.U."/>
            <person name="Krull I."/>
            <person name="Galeazzi R.L."/>
            <person name="Schmid C."/>
            <person name="Perren A."/>
        </authorList>
    </citation>
    <scope>VARIANT PPGL4 PRO-132</scope>
</reference>
<reference key="27">
    <citation type="journal article" date="2007" name="N. Engl. J. Med.">
        <title>Somatic SDHB mutation in an extraadrenal pheochromocytoma.</title>
        <authorList>
            <person name="van Nederveen F.H."/>
            <person name="Korpershoek E."/>
            <person name="Lenders J.W.M."/>
            <person name="de Krijger R.R."/>
            <person name="Dinjens W.N.M."/>
        </authorList>
    </citation>
    <scope>VARIANT PPGL4 PHE-100</scope>
</reference>
<reference key="28">
    <citation type="journal article" date="2007" name="N. Engl. J. Med.">
        <title>Familial gastrointestinal stromal tumors and germ-line mutations.</title>
        <authorList>
            <person name="McWhinney S.R."/>
            <person name="Pasini B."/>
            <person name="Stratakis C.A."/>
        </authorList>
    </citation>
    <scope>INVOLVEMENT IN PGGSS</scope>
</reference>
<reference key="29">
    <citation type="journal article" date="2008" name="Am. J. Hum. Genet.">
        <title>Germline mutations and variants in the succinate dehydrogenase genes in Cowden and Cowden-like syndromes.</title>
        <authorList>
            <person name="Ni Y."/>
            <person name="Zbuk K.M."/>
            <person name="Sadler T."/>
            <person name="Patocs A."/>
            <person name="Lobo G."/>
            <person name="Edelman E."/>
            <person name="Platzer P."/>
            <person name="Orloff M.S."/>
            <person name="Waite K.A."/>
            <person name="Eng C."/>
        </authorList>
    </citation>
    <scope>VARIANTS GLY-3 AND PRO-163</scope>
    <scope>CHARACTERIZATION OF VARIANTS GLY-3 AND PRO-163</scope>
</reference>
<reference key="30">
    <citation type="journal article" date="2012" name="J. Med. Genet.">
        <title>Recessive germline SDHA and SDHB mutations causing leukodystrophy and isolated mitochondrial complex II deficiency.</title>
        <authorList>
            <person name="Alston C.L."/>
            <person name="Davison J.E."/>
            <person name="Meloni F."/>
            <person name="van der Westhuizen F.H."/>
            <person name="He L."/>
            <person name="Hornig-Do H.T."/>
            <person name="Peet A.C."/>
            <person name="Gissen P."/>
            <person name="Goffrini P."/>
            <person name="Ferrero I."/>
            <person name="Wassmer E."/>
            <person name="McFarland R."/>
            <person name="Taylor R.W."/>
        </authorList>
    </citation>
    <scope>VARIANT MC2DN4 VAL-48</scope>
    <scope>INVOLVEMENT IN MC2DN4</scope>
</reference>
<reference key="31">
    <citation type="journal article" date="2015" name="Mol. Genet. Metab. Rep.">
        <title>Mitochondrial leukoencephalopathy and complex II deficiency associated with a recessive SDHB mutation with reduced penetrance.</title>
        <authorList>
            <person name="Ardissone A."/>
            <person name="Invernizzi F."/>
            <person name="Nasca A."/>
            <person name="Moroni I."/>
            <person name="Farina L."/>
            <person name="Ghezzi D."/>
        </authorList>
    </citation>
    <scope>VARIANT MC2DN4 VAL-48</scope>
    <scope>CHARACTERIZATION OF VARIANT MC2DN4 VAL-48</scope>
    <scope>INVOLVEMENT IN MC2DN4</scope>
    <scope>FUNCTION</scope>
    <scope>CATALYTIC ACTIVITY</scope>
    <scope>PATHWAY</scope>
</reference>
<reference key="32">
    <citation type="journal article" date="2016" name="Ann. Neurol.">
        <title>Magnetic resonance imaging spectrum of succinate dehydrogenase-related infantile leukoencephalopathy.</title>
        <authorList>
            <consortium name="SDH Study Group"/>
            <person name="Helman G."/>
            <person name="Caldovic L."/>
            <person name="Whitehead M.T."/>
            <person name="Simons C."/>
            <person name="Brockmann K."/>
            <person name="Edvardson S."/>
            <person name="Bai R."/>
            <person name="Moroni I."/>
            <person name="Taylor J.M."/>
            <person name="Van Haren K."/>
            <person name="Taft R.J."/>
            <person name="Vanderver A."/>
            <person name="van der Knaap M.S."/>
        </authorList>
    </citation>
    <scope>VARIANTS MC2DN4 VAL-48 AND THR-103</scope>
    <scope>INVOLVEMENT IN MC2DN4</scope>
</reference>
<reference key="33">
    <citation type="journal article" date="2017" name="JIMD Rep.">
        <title>Leukoencephalopathy due to Complex II Deficiency and Bi-Allelic SDHB Mutations: Further Cases and Implications for Genetic Counselling.</title>
        <authorList>
            <person name="Groenborg S."/>
            <person name="Darin N."/>
            <person name="Miranda M.J."/>
            <person name="Damgaard B."/>
            <person name="Cayuela J.A."/>
            <person name="Oldfors A."/>
            <person name="Kollberg G."/>
            <person name="Hansen T.V.O."/>
            <person name="Ravn K."/>
            <person name="Wibrand F."/>
            <person name="Oestergaard E."/>
        </authorList>
    </citation>
    <scope>VARIANTS MC2DN4 VAL-48; HIS-230 AND VAL-257</scope>
    <scope>CHARACTERIZATION OF VARIANT MC2DN4 VAL-257</scope>
    <scope>FUNCTION</scope>
    <scope>CATALYTIC ACTIVITY</scope>
    <scope>ALTERNATIVE SPLICING</scope>
</reference>
<reference key="34">
    <citation type="journal article" date="2020" name="Ann. Hum. Genet.">
        <title>Novel variant p.(Ala102Thr) in SDHB causes mitochondrial complex II deficiency: Case report and review of the literature.</title>
        <authorList>
            <person name="Kaur P."/>
            <person name="Sharma S."/>
            <person name="Kadavigere R."/>
            <person name="Girisha K.M."/>
            <person name="Shukla A."/>
        </authorList>
    </citation>
    <scope>VARIANT MC2DN4 THR-102</scope>
</reference>
<comment type="function">
    <text evidence="1 21 22">Iron-sulfur protein (IP) subunit of the succinate dehydrogenase complex (mitochondrial respiratory chain complex II), responsible for transferring electrons from succinate to ubiquinone (coenzyme Q) (PubMed:26925370, PubMed:27604842). SDH also oxidizes malate to the non-canonical enol form of oxaloacetate, enol-oxaloacetate (By similarity). Enol-oxaloacetate, which is a potent inhibitor of the succinate dehydrogenase activity, is further isomerized into keto-oxaloacetate (By similarity).</text>
</comment>
<comment type="catalytic activity">
    <reaction evidence="21 22">
        <text>a quinone + succinate = fumarate + a quinol</text>
        <dbReference type="Rhea" id="RHEA:40523"/>
        <dbReference type="ChEBI" id="CHEBI:24646"/>
        <dbReference type="ChEBI" id="CHEBI:29806"/>
        <dbReference type="ChEBI" id="CHEBI:30031"/>
        <dbReference type="ChEBI" id="CHEBI:132124"/>
        <dbReference type="EC" id="1.3.5.1"/>
    </reaction>
</comment>
<comment type="catalytic activity">
    <reaction evidence="1">
        <text>(R)-malate + a quinone = enol-oxaloacetate + a quinol</text>
        <dbReference type="Rhea" id="RHEA:79827"/>
        <dbReference type="ChEBI" id="CHEBI:15588"/>
        <dbReference type="ChEBI" id="CHEBI:17479"/>
        <dbReference type="ChEBI" id="CHEBI:24646"/>
        <dbReference type="ChEBI" id="CHEBI:132124"/>
    </reaction>
    <physiologicalReaction direction="left-to-right" evidence="1">
        <dbReference type="Rhea" id="RHEA:79828"/>
    </physiologicalReaction>
</comment>
<comment type="catalytic activity">
    <reaction evidence="1">
        <text>(S)-malate + a quinone = enol-oxaloacetate + a quinol</text>
        <dbReference type="Rhea" id="RHEA:79831"/>
        <dbReference type="ChEBI" id="CHEBI:15589"/>
        <dbReference type="ChEBI" id="CHEBI:17479"/>
        <dbReference type="ChEBI" id="CHEBI:24646"/>
        <dbReference type="ChEBI" id="CHEBI:132124"/>
    </reaction>
    <physiologicalReaction direction="left-to-right" evidence="1">
        <dbReference type="Rhea" id="RHEA:79832"/>
    </physiologicalReaction>
</comment>
<comment type="cofactor">
    <cofactor evidence="25">
        <name>[2Fe-2S] cluster</name>
        <dbReference type="ChEBI" id="CHEBI:190135"/>
    </cofactor>
    <text evidence="25">Binds 1 [2Fe-2S] cluster.</text>
</comment>
<comment type="cofactor">
    <cofactor evidence="25">
        <name>[3Fe-4S] cluster</name>
        <dbReference type="ChEBI" id="CHEBI:21137"/>
    </cofactor>
    <text evidence="25">Binds 1 [3Fe-4S] cluster.</text>
</comment>
<comment type="cofactor">
    <cofactor evidence="25">
        <name>[4Fe-4S] cluster</name>
        <dbReference type="ChEBI" id="CHEBI:49883"/>
    </cofactor>
    <text evidence="25">Binds 1 [4Fe-4S] cluster.</text>
</comment>
<comment type="activity regulation">
    <text evidence="1">Enol-oxaloacetate inhibits the succinate dehydrogenase activity.</text>
</comment>
<comment type="pathway">
    <text evidence="21 22">Carbohydrate metabolism; tricarboxylic acid cycle; fumarate from succinate (eukaryal route): step 1/1.</text>
</comment>
<comment type="subunit">
    <text evidence="20 25">Component of complex II composed of four subunits: the flavoprotein (FP) SDHA, iron-sulfur protein (IP) SDHB, and a cytochrome b560 composed of SDHC and SDHD (PubMed:37098072). Interacts with SDHAF1; the interaction is required for iron-sulfur cluster incorporation into SDHB (PubMed:26749241).</text>
</comment>
<comment type="subunit">
    <text evidence="24">(Microbial infection) Interacts with JC virus small t antigen.</text>
</comment>
<comment type="interaction">
    <interactant intactId="EBI-1056481">
        <id>P21912</id>
    </interactant>
    <interactant intactId="EBI-1805738">
        <id>Q8IWL3</id>
        <label>HSCB</label>
    </interactant>
    <organismsDiffer>false</organismsDiffer>
    <experiments>22</experiments>
</comment>
<comment type="interaction">
    <interactant intactId="EBI-1056481">
        <id>P21912</id>
    </interactant>
    <interactant intactId="EBI-1047335">
        <id>Q9H1K1</id>
        <label>ISCU</label>
    </interactant>
    <organismsDiffer>false</organismsDiffer>
    <experiments>8</experiments>
</comment>
<comment type="interaction">
    <interactant intactId="EBI-1056481">
        <id>P21912</id>
    </interactant>
    <interactant intactId="EBI-1057265">
        <id>P31040</id>
        <label>SDHA</label>
    </interactant>
    <organismsDiffer>false</organismsDiffer>
    <experiments>11</experiments>
</comment>
<comment type="interaction">
    <interactant intactId="EBI-1056481">
        <id>P21912</id>
    </interactant>
    <interactant intactId="EBI-12011488">
        <id>A6NFY7</id>
        <label>SDHAF1</label>
    </interactant>
    <organismsDiffer>false</organismsDiffer>
    <experiments>13</experiments>
</comment>
<comment type="subcellular location">
    <subcellularLocation>
        <location evidence="25">Mitochondrion inner membrane</location>
        <topology evidence="25">Peripheral membrane protein</topology>
        <orientation evidence="25">Matrix side</orientation>
    </subcellularLocation>
</comment>
<comment type="disease" evidence="5 6 7 8 9 10 11 12 13 15">
    <disease id="DI-01735">
        <name>Pheochromocytoma/paraganglioma syndrome 4</name>
        <acronym>PPGL4</acronym>
        <description>A form of pheochromocytoma/paraganglioma syndrome, a tumor predisposition syndrome characterized by the development of neuroendocrine tumors, usually in adulthood. Pheochromocytomas are catecholamine-producing tumors that arise from chromaffin cells in the adrenal medulla. Paragangliomas develop from sympathetic paraganglia in the thorax, abdomen, and pelvis, as well as from parasympathetic paraganglia in the head and neck. PPGL4 inheritance is autosomal dominant.</description>
        <dbReference type="MIM" id="115310"/>
    </disease>
    <text>The disease is caused by variants affecting the gene represented in this entry.</text>
</comment>
<comment type="disease" evidence="16">
    <disease id="DI-02128">
        <name>Paraganglioma and gastric stromal sarcoma</name>
        <acronym>PGGSS</acronym>
        <description>Gastrointestinal stromal tumors may be sporadic or inherited in an autosomal dominant manner, alone or as a component of a syndrome associated with other tumors, such as in the context of neurofibromatosis type 1 (NF1). Patients have both gastrointestinal stromal tumors and paragangliomas. Susceptibility to the tumors was inherited in an apparently autosomal dominant manner, with incomplete penetrance.</description>
        <dbReference type="MIM" id="606864"/>
    </disease>
    <text>The disease is caused by variants affecting the gene represented in this entry.</text>
</comment>
<comment type="disease" evidence="18 19 21 22 23">
    <disease id="DI-06039">
        <name>Mitochondrial complex II deficiency, nuclear type 4</name>
        <acronym>MC2DN4</acronym>
        <description>A form of mitochondrial complex II deficiency, a disorder with heterogeneous clinical manifestations. Some patients have multisystem involvement of the brain, heart, muscle, liver, and kidneys resulting in death in infancy, whereas others have only isolated cardiac or muscle involvement with onset in adulthood and normal cognition. Clinical features include psychomotor regression in infants, poor growth with lack of speech development, severe spastic quadriplegia, dystonia, progressive leukoencephalopathy, muscle weakness, exercise intolerance, cardiomyopathy. Some patients manifest Leigh syndrome or Kearns-Sayre syndrome. MC2DN4 is a severe, autosomal recessive form characterized by early-onset progressive neurodegeneration with leukoencephalopathy.</description>
        <dbReference type="MIM" id="619224"/>
    </disease>
    <text>The disease is caused by variants affecting the gene represented in this entry.</text>
</comment>
<comment type="similarity">
    <text evidence="26">Belongs to the succinate dehydrogenase/fumarate reductase iron-sulfur protein family.</text>
</comment>
<comment type="online information" name="Atlas of Genetics and Cytogenetics in Oncology and Haematology">
    <link uri="https://atlasgeneticsoncology.org/gene/388/SDHB"/>
</comment>
<comment type="online information" name="TCA Cycle Gene Mutation Database">
    <link uri="https://databases.lovd.nl/shared/genes/SDHB"/>
</comment>
<gene>
    <name type="primary">SDHB</name>
    <name type="synonym">SDH</name>
    <name type="synonym">SDH1</name>
</gene>
<evidence type="ECO:0000250" key="1">
    <source>
        <dbReference type="UniProtKB" id="Q3T189"/>
    </source>
</evidence>
<evidence type="ECO:0000250" key="2">
    <source>
        <dbReference type="UniProtKB" id="Q9CQA3"/>
    </source>
</evidence>
<evidence type="ECO:0000255" key="3">
    <source>
        <dbReference type="PROSITE-ProRule" id="PRU00465"/>
    </source>
</evidence>
<evidence type="ECO:0000255" key="4">
    <source>
        <dbReference type="PROSITE-ProRule" id="PRU00711"/>
    </source>
</evidence>
<evidence type="ECO:0000269" key="5">
    <source>
    </source>
</evidence>
<evidence type="ECO:0000269" key="6">
    <source>
    </source>
</evidence>
<evidence type="ECO:0000269" key="7">
    <source>
    </source>
</evidence>
<evidence type="ECO:0000269" key="8">
    <source>
    </source>
</evidence>
<evidence type="ECO:0000269" key="9">
    <source>
    </source>
</evidence>
<evidence type="ECO:0000269" key="10">
    <source>
    </source>
</evidence>
<evidence type="ECO:0000269" key="11">
    <source>
    </source>
</evidence>
<evidence type="ECO:0000269" key="12">
    <source>
    </source>
</evidence>
<evidence type="ECO:0000269" key="13">
    <source>
    </source>
</evidence>
<evidence type="ECO:0000269" key="14">
    <source>
    </source>
</evidence>
<evidence type="ECO:0000269" key="15">
    <source>
    </source>
</evidence>
<evidence type="ECO:0000269" key="16">
    <source>
    </source>
</evidence>
<evidence type="ECO:0000269" key="17">
    <source>
    </source>
</evidence>
<evidence type="ECO:0000269" key="18">
    <source>
    </source>
</evidence>
<evidence type="ECO:0000269" key="19">
    <source>
    </source>
</evidence>
<evidence type="ECO:0000269" key="20">
    <source>
    </source>
</evidence>
<evidence type="ECO:0000269" key="21">
    <source>
    </source>
</evidence>
<evidence type="ECO:0000269" key="22">
    <source>
    </source>
</evidence>
<evidence type="ECO:0000269" key="23">
    <source>
    </source>
</evidence>
<evidence type="ECO:0000269" key="24">
    <source>
    </source>
</evidence>
<evidence type="ECO:0000269" key="25">
    <source>
    </source>
</evidence>
<evidence type="ECO:0000305" key="26"/>
<evidence type="ECO:0007744" key="27">
    <source>
        <dbReference type="PDB" id="8GS8"/>
    </source>
</evidence>
<evidence type="ECO:0007744" key="28">
    <source>
    </source>
</evidence>
<evidence type="ECO:0007829" key="29">
    <source>
        <dbReference type="PDB" id="7KCM"/>
    </source>
</evidence>
<evidence type="ECO:0007829" key="30">
    <source>
        <dbReference type="PDB" id="8GS8"/>
    </source>
</evidence>
<keyword id="KW-0001">2Fe-2S</keyword>
<keyword id="KW-0002">3D-structure</keyword>
<keyword id="KW-0003">3Fe-4S</keyword>
<keyword id="KW-0004">4Fe-4S</keyword>
<keyword id="KW-0007">Acetylation</keyword>
<keyword id="KW-0225">Disease variant</keyword>
<keyword id="KW-0249">Electron transport</keyword>
<keyword id="KW-0945">Host-virus interaction</keyword>
<keyword id="KW-0408">Iron</keyword>
<keyword id="KW-0411">Iron-sulfur</keyword>
<keyword id="KW-0472">Membrane</keyword>
<keyword id="KW-0479">Metal-binding</keyword>
<keyword id="KW-0496">Mitochondrion</keyword>
<keyword id="KW-0999">Mitochondrion inner membrane</keyword>
<keyword id="KW-0560">Oxidoreductase</keyword>
<keyword id="KW-1274">Primary mitochondrial disease</keyword>
<keyword id="KW-1267">Proteomics identification</keyword>
<keyword id="KW-1185">Reference proteome</keyword>
<keyword id="KW-0809">Transit peptide</keyword>
<keyword id="KW-0813">Transport</keyword>
<keyword id="KW-0816">Tricarboxylic acid cycle</keyword>
<name>SDHB_HUMAN</name>
<organism>
    <name type="scientific">Homo sapiens</name>
    <name type="common">Human</name>
    <dbReference type="NCBI Taxonomy" id="9606"/>
    <lineage>
        <taxon>Eukaryota</taxon>
        <taxon>Metazoa</taxon>
        <taxon>Chordata</taxon>
        <taxon>Craniata</taxon>
        <taxon>Vertebrata</taxon>
        <taxon>Euteleostomi</taxon>
        <taxon>Mammalia</taxon>
        <taxon>Eutheria</taxon>
        <taxon>Euarchontoglires</taxon>
        <taxon>Primates</taxon>
        <taxon>Haplorrhini</taxon>
        <taxon>Catarrhini</taxon>
        <taxon>Hominidae</taxon>
        <taxon>Homo</taxon>
    </lineage>
</organism>
<sequence length="280" mass="31630">MAAVVALSLRRRLPATTLGGACLQASRGAQTAAATAPRIKKFAIYRWDPDKAGDKPHMQTYEVDLNKCGPMVLDALIKIKNEVDSTLTFRRSCREGICGSCAMNINGGNTLACTRRIDTNLNKVSKIYPLPHMYVIKDLVPDLSNFYAQYKSIEPYLKKKDESQEGKQQYLQSIEEREKLDGLYECILCACCSTSCPSYWWNGDKYLGPAVLMQAYRWMIDSRDDFTEERLAKLQDPFSLYRCHTIMNCTRTCPKGLNPGKAIAEIKKMMATYKEKKASV</sequence>
<protein>
    <recommendedName>
        <fullName>Succinate dehydrogenase [ubiquinone] iron-sulfur subunit, mitochondrial</fullName>
        <ecNumber evidence="21 22">1.3.5.1</ecNumber>
    </recommendedName>
    <alternativeName>
        <fullName>Iron-sulfur subunit of complex II</fullName>
        <shortName>Ip</shortName>
    </alternativeName>
    <alternativeName>
        <fullName>Malate dehydrogenase [quinone] iron-sulfur subunit</fullName>
        <ecNumber evidence="1">1.1.5.-</ecNumber>
    </alternativeName>
</protein>
<proteinExistence type="evidence at protein level"/>
<dbReference type="EC" id="1.3.5.1" evidence="21 22"/>
<dbReference type="EC" id="1.1.5.-" evidence="1"/>
<dbReference type="EMBL" id="U17248">
    <property type="protein sequence ID" value="AAA81167.1"/>
    <property type="molecule type" value="mRNA"/>
</dbReference>
<dbReference type="EMBL" id="U17886">
    <property type="protein sequence ID" value="AAA80581.1"/>
    <property type="molecule type" value="Genomic_DNA"/>
</dbReference>
<dbReference type="EMBL" id="U17296">
    <property type="protein sequence ID" value="AAA80581.1"/>
    <property type="status" value="JOINED"/>
    <property type="molecule type" value="Genomic_DNA"/>
</dbReference>
<dbReference type="EMBL" id="U17880">
    <property type="protein sequence ID" value="AAA80581.1"/>
    <property type="status" value="JOINED"/>
    <property type="molecule type" value="Genomic_DNA"/>
</dbReference>
<dbReference type="EMBL" id="U17881">
    <property type="protein sequence ID" value="AAA80581.1"/>
    <property type="status" value="JOINED"/>
    <property type="molecule type" value="Genomic_DNA"/>
</dbReference>
<dbReference type="EMBL" id="U17882">
    <property type="protein sequence ID" value="AAA80581.1"/>
    <property type="status" value="JOINED"/>
    <property type="molecule type" value="Genomic_DNA"/>
</dbReference>
<dbReference type="EMBL" id="U17883">
    <property type="protein sequence ID" value="AAA80581.1"/>
    <property type="status" value="JOINED"/>
    <property type="molecule type" value="Genomic_DNA"/>
</dbReference>
<dbReference type="EMBL" id="U17884">
    <property type="protein sequence ID" value="AAA80581.1"/>
    <property type="status" value="JOINED"/>
    <property type="molecule type" value="Genomic_DNA"/>
</dbReference>
<dbReference type="EMBL" id="U17885">
    <property type="protein sequence ID" value="AAA80581.1"/>
    <property type="status" value="JOINED"/>
    <property type="molecule type" value="Genomic_DNA"/>
</dbReference>
<dbReference type="EMBL" id="AK312056">
    <property type="protein sequence ID" value="BAG34992.1"/>
    <property type="molecule type" value="mRNA"/>
</dbReference>
<dbReference type="EMBL" id="AL049569">
    <property type="status" value="NOT_ANNOTATED_CDS"/>
    <property type="molecule type" value="Genomic_DNA"/>
</dbReference>
<dbReference type="EMBL" id="CH471134">
    <property type="protein sequence ID" value="EAW94828.1"/>
    <property type="molecule type" value="Genomic_DNA"/>
</dbReference>
<dbReference type="EMBL" id="BC007840">
    <property type="protein sequence ID" value="AAH07840.1"/>
    <property type="molecule type" value="mRNA"/>
</dbReference>
<dbReference type="EMBL" id="DQ403007">
    <property type="protein sequence ID" value="ABD77140.1"/>
    <property type="molecule type" value="mRNA"/>
</dbReference>
<dbReference type="EMBL" id="D10245">
    <property type="protein sequence ID" value="BAA01089.1"/>
    <property type="molecule type" value="mRNA"/>
</dbReference>
<dbReference type="EMBL" id="M32246">
    <property type="protein sequence ID" value="AAA35708.1"/>
    <property type="molecule type" value="mRNA"/>
</dbReference>
<dbReference type="CCDS" id="CCDS176.1"/>
<dbReference type="PIR" id="I38895">
    <property type="entry name" value="I38895"/>
</dbReference>
<dbReference type="RefSeq" id="NP_002991.2">
    <property type="nucleotide sequence ID" value="NM_003000.3"/>
</dbReference>
<dbReference type="PDB" id="7KCL">
    <property type="method" value="EM"/>
    <property type="resolution" value="3.14 A"/>
    <property type="chains" value="C=29-160"/>
</dbReference>
<dbReference type="PDB" id="7KCM">
    <property type="method" value="EM"/>
    <property type="resolution" value="3.43 A"/>
    <property type="chains" value="C=29-160"/>
</dbReference>
<dbReference type="PDB" id="7KLU">
    <property type="method" value="EM"/>
    <property type="resolution" value="3.50 A"/>
    <property type="chains" value="B/C=19-160"/>
</dbReference>
<dbReference type="PDB" id="7KLV">
    <property type="method" value="EM"/>
    <property type="resolution" value="3.10 A"/>
    <property type="chains" value="B=19-160"/>
</dbReference>
<dbReference type="PDB" id="8GS8">
    <property type="method" value="EM"/>
    <property type="resolution" value="2.86 A"/>
    <property type="chains" value="B=1-280"/>
</dbReference>
<dbReference type="PDBsum" id="7KCL"/>
<dbReference type="PDBsum" id="7KCM"/>
<dbReference type="PDBsum" id="7KLU"/>
<dbReference type="PDBsum" id="7KLV"/>
<dbReference type="PDBsum" id="8GS8"/>
<dbReference type="EMDB" id="EMD-22812"/>
<dbReference type="EMDB" id="EMD-22813"/>
<dbReference type="EMDB" id="EMD-22814"/>
<dbReference type="EMDB" id="EMD-22815"/>
<dbReference type="EMDB" id="EMD-22816"/>
<dbReference type="EMDB" id="EMD-22918"/>
<dbReference type="EMDB" id="EMD-22919"/>
<dbReference type="EMDB" id="EMD-34225"/>
<dbReference type="SMR" id="P21912"/>
<dbReference type="BioGRID" id="112291">
    <property type="interactions" value="211"/>
</dbReference>
<dbReference type="ComplexPortal" id="CPX-561">
    <property type="entry name" value="Mitochondrial respiratory chain complex II"/>
</dbReference>
<dbReference type="DIP" id="DIP-39666N"/>
<dbReference type="FunCoup" id="P21912">
    <property type="interactions" value="1631"/>
</dbReference>
<dbReference type="IntAct" id="P21912">
    <property type="interactions" value="75"/>
</dbReference>
<dbReference type="MINT" id="P21912"/>
<dbReference type="STRING" id="9606.ENSP00000364649"/>
<dbReference type="BindingDB" id="P21912"/>
<dbReference type="ChEMBL" id="CHEMBL4105824"/>
<dbReference type="DrugBank" id="DB04141">
    <property type="generic name" value="2-Hexyloxy-6-Hydroxymethyl-Tetrahydro-Pyran-3,4,5-Triol"/>
</dbReference>
<dbReference type="DrugBank" id="DB08689">
    <property type="generic name" value="Ubiquinone Q1"/>
</dbReference>
<dbReference type="TCDB" id="3.D.10.1.7">
    <property type="family name" value="the prokaryotic succinate dehydrogenase (sdh) family"/>
</dbReference>
<dbReference type="GlyGen" id="P21912">
    <property type="glycosylation" value="2 sites, 1 O-linked glycan (1 site)"/>
</dbReference>
<dbReference type="iPTMnet" id="P21912"/>
<dbReference type="PhosphoSitePlus" id="P21912"/>
<dbReference type="SwissPalm" id="P21912"/>
<dbReference type="BioMuta" id="SDHB"/>
<dbReference type="DMDM" id="20455488"/>
<dbReference type="jPOST" id="P21912"/>
<dbReference type="MassIVE" id="P21912"/>
<dbReference type="PaxDb" id="9606-ENSP00000364649"/>
<dbReference type="PeptideAtlas" id="P21912"/>
<dbReference type="ProteomicsDB" id="53939"/>
<dbReference type="Pumba" id="P21912"/>
<dbReference type="Antibodypedia" id="1264">
    <property type="antibodies" value="617 antibodies from 40 providers"/>
</dbReference>
<dbReference type="CPTC" id="P21912">
    <property type="antibodies" value="1 antibody"/>
</dbReference>
<dbReference type="DNASU" id="6390"/>
<dbReference type="Ensembl" id="ENST00000375499.8">
    <property type="protein sequence ID" value="ENSP00000364649.3"/>
    <property type="gene ID" value="ENSG00000117118.12"/>
</dbReference>
<dbReference type="GeneID" id="6390"/>
<dbReference type="KEGG" id="hsa:6390"/>
<dbReference type="MANE-Select" id="ENST00000375499.8">
    <property type="protein sequence ID" value="ENSP00000364649.3"/>
    <property type="RefSeq nucleotide sequence ID" value="NM_003000.3"/>
    <property type="RefSeq protein sequence ID" value="NP_002991.2"/>
</dbReference>
<dbReference type="UCSC" id="uc001bae.5">
    <property type="organism name" value="human"/>
</dbReference>
<dbReference type="AGR" id="HGNC:10681"/>
<dbReference type="CTD" id="6390"/>
<dbReference type="DisGeNET" id="6390"/>
<dbReference type="GeneCards" id="SDHB"/>
<dbReference type="GeneReviews" id="SDHB"/>
<dbReference type="HGNC" id="HGNC:10681">
    <property type="gene designation" value="SDHB"/>
</dbReference>
<dbReference type="HPA" id="ENSG00000117118">
    <property type="expression patterns" value="Tissue enhanced (skeletal muscle, tongue)"/>
</dbReference>
<dbReference type="MalaCards" id="SDHB"/>
<dbReference type="MIM" id="115310">
    <property type="type" value="phenotype"/>
</dbReference>
<dbReference type="MIM" id="185470">
    <property type="type" value="gene"/>
</dbReference>
<dbReference type="MIM" id="606864">
    <property type="type" value="phenotype"/>
</dbReference>
<dbReference type="MIM" id="619224">
    <property type="type" value="phenotype"/>
</dbReference>
<dbReference type="neXtProt" id="NX_P21912"/>
<dbReference type="OpenTargets" id="ENSG00000117118"/>
<dbReference type="Orphanet" id="97286">
    <property type="disease" value="Carney-Stratakis syndrome"/>
</dbReference>
<dbReference type="Orphanet" id="201">
    <property type="disease" value="Cowden syndrome"/>
</dbReference>
<dbReference type="Orphanet" id="44890">
    <property type="disease" value="Gastrointestinal stromal tumor"/>
</dbReference>
<dbReference type="Orphanet" id="29072">
    <property type="disease" value="Hereditary pheochromocytoma-paraganglioma"/>
</dbReference>
<dbReference type="Orphanet" id="3208">
    <property type="disease" value="Isolated succinate-CoQ reductase deficiency"/>
</dbReference>
<dbReference type="Orphanet" id="276621">
    <property type="disease" value="Sporadic pheochromocytoma/secreting paraganglioma"/>
</dbReference>
<dbReference type="PharmGKB" id="PA35606"/>
<dbReference type="VEuPathDB" id="HostDB:ENSG00000117118"/>
<dbReference type="eggNOG" id="KOG3049">
    <property type="taxonomic scope" value="Eukaryota"/>
</dbReference>
<dbReference type="GeneTree" id="ENSGT00390000013558"/>
<dbReference type="HOGENOM" id="CLU_044838_0_2_1"/>
<dbReference type="InParanoid" id="P21912"/>
<dbReference type="OMA" id="DGQYFGP"/>
<dbReference type="OrthoDB" id="1696654at2759"/>
<dbReference type="PAN-GO" id="P21912">
    <property type="GO annotations" value="3 GO annotations based on evolutionary models"/>
</dbReference>
<dbReference type="PhylomeDB" id="P21912"/>
<dbReference type="TreeFam" id="TF300754"/>
<dbReference type="BioCyc" id="MetaCyc:ENSG00000117118-MONOMER"/>
<dbReference type="BRENDA" id="1.3.5.1">
    <property type="organism ID" value="2681"/>
</dbReference>
<dbReference type="PathwayCommons" id="P21912"/>
<dbReference type="Reactome" id="R-HSA-611105">
    <property type="pathway name" value="Respiratory electron transport"/>
</dbReference>
<dbReference type="Reactome" id="R-HSA-71403">
    <property type="pathway name" value="Citric acid cycle (TCA cycle)"/>
</dbReference>
<dbReference type="Reactome" id="R-HSA-9854311">
    <property type="pathway name" value="Maturation of TCA enzymes and regulation of TCA cycle"/>
</dbReference>
<dbReference type="SignaLink" id="P21912"/>
<dbReference type="SIGNOR" id="P21912"/>
<dbReference type="UniPathway" id="UPA00223">
    <property type="reaction ID" value="UER01006"/>
</dbReference>
<dbReference type="BioGRID-ORCS" id="6390">
    <property type="hits" value="354 hits in 1167 CRISPR screens"/>
</dbReference>
<dbReference type="CD-CODE" id="91857CE7">
    <property type="entry name" value="Nucleolus"/>
</dbReference>
<dbReference type="ChiTaRS" id="SDHB">
    <property type="organism name" value="human"/>
</dbReference>
<dbReference type="GeneWiki" id="SDHB"/>
<dbReference type="GenomeRNAi" id="6390"/>
<dbReference type="Pharos" id="P21912">
    <property type="development level" value="Tchem"/>
</dbReference>
<dbReference type="PRO" id="PR:P21912"/>
<dbReference type="Proteomes" id="UP000005640">
    <property type="component" value="Chromosome 1"/>
</dbReference>
<dbReference type="RNAct" id="P21912">
    <property type="molecule type" value="protein"/>
</dbReference>
<dbReference type="Bgee" id="ENSG00000117118">
    <property type="expression patterns" value="Expressed in heart left ventricle and 207 other cell types or tissues"/>
</dbReference>
<dbReference type="ExpressionAtlas" id="P21912">
    <property type="expression patterns" value="baseline and differential"/>
</dbReference>
<dbReference type="GO" id="GO:0005743">
    <property type="term" value="C:mitochondrial inner membrane"/>
    <property type="evidence" value="ECO:0000250"/>
    <property type="project" value="UniProtKB"/>
</dbReference>
<dbReference type="GO" id="GO:0005759">
    <property type="term" value="C:mitochondrial matrix"/>
    <property type="evidence" value="ECO:0000304"/>
    <property type="project" value="Reactome"/>
</dbReference>
<dbReference type="GO" id="GO:0031966">
    <property type="term" value="C:mitochondrial membrane"/>
    <property type="evidence" value="ECO:0000318"/>
    <property type="project" value="GO_Central"/>
</dbReference>
<dbReference type="GO" id="GO:0005739">
    <property type="term" value="C:mitochondrion"/>
    <property type="evidence" value="ECO:0000314"/>
    <property type="project" value="HPA"/>
</dbReference>
<dbReference type="GO" id="GO:0005654">
    <property type="term" value="C:nucleoplasm"/>
    <property type="evidence" value="ECO:0000314"/>
    <property type="project" value="HPA"/>
</dbReference>
<dbReference type="GO" id="GO:0005886">
    <property type="term" value="C:plasma membrane"/>
    <property type="evidence" value="ECO:0000314"/>
    <property type="project" value="HPA"/>
</dbReference>
<dbReference type="GO" id="GO:0045273">
    <property type="term" value="C:respiratory chain complex II (succinate dehydrogenase)"/>
    <property type="evidence" value="ECO:0000314"/>
    <property type="project" value="UniProtKB"/>
</dbReference>
<dbReference type="GO" id="GO:0051537">
    <property type="term" value="F:2 iron, 2 sulfur cluster binding"/>
    <property type="evidence" value="ECO:0000250"/>
    <property type="project" value="UniProtKB"/>
</dbReference>
<dbReference type="GO" id="GO:0051538">
    <property type="term" value="F:3 iron, 4 sulfur cluster binding"/>
    <property type="evidence" value="ECO:0000250"/>
    <property type="project" value="UniProtKB"/>
</dbReference>
<dbReference type="GO" id="GO:0051539">
    <property type="term" value="F:4 iron, 4 sulfur cluster binding"/>
    <property type="evidence" value="ECO:0000250"/>
    <property type="project" value="UniProtKB"/>
</dbReference>
<dbReference type="GO" id="GO:0009055">
    <property type="term" value="F:electron transfer activity"/>
    <property type="evidence" value="ECO:0007669"/>
    <property type="project" value="InterPro"/>
</dbReference>
<dbReference type="GO" id="GO:0046872">
    <property type="term" value="F:metal ion binding"/>
    <property type="evidence" value="ECO:0007669"/>
    <property type="project" value="UniProtKB-KW"/>
</dbReference>
<dbReference type="GO" id="GO:0008177">
    <property type="term" value="F:succinate dehydrogenase (quinone) activity"/>
    <property type="evidence" value="ECO:0000315"/>
    <property type="project" value="UniProtKB"/>
</dbReference>
<dbReference type="GO" id="GO:0048039">
    <property type="term" value="F:ubiquinone binding"/>
    <property type="evidence" value="ECO:0000250"/>
    <property type="project" value="UniProtKB"/>
</dbReference>
<dbReference type="GO" id="GO:0009060">
    <property type="term" value="P:aerobic respiration"/>
    <property type="evidence" value="ECO:0000318"/>
    <property type="project" value="GO_Central"/>
</dbReference>
<dbReference type="GO" id="GO:0006121">
    <property type="term" value="P:mitochondrial electron transport, succinate to ubiquinone"/>
    <property type="evidence" value="ECO:0000303"/>
    <property type="project" value="ComplexPortal"/>
</dbReference>
<dbReference type="GO" id="GO:0042776">
    <property type="term" value="P:proton motive force-driven mitochondrial ATP synthesis"/>
    <property type="evidence" value="ECO:0000303"/>
    <property type="project" value="ComplexPortal"/>
</dbReference>
<dbReference type="GO" id="GO:0022904">
    <property type="term" value="P:respiratory electron transport chain"/>
    <property type="evidence" value="ECO:0000318"/>
    <property type="project" value="GO_Central"/>
</dbReference>
<dbReference type="GO" id="GO:0006105">
    <property type="term" value="P:succinate metabolic process"/>
    <property type="evidence" value="ECO:0007669"/>
    <property type="project" value="Ensembl"/>
</dbReference>
<dbReference type="GO" id="GO:0006099">
    <property type="term" value="P:tricarboxylic acid cycle"/>
    <property type="evidence" value="ECO:0000304"/>
    <property type="project" value="ProtInc"/>
</dbReference>
<dbReference type="CDD" id="cd00207">
    <property type="entry name" value="fer2"/>
    <property type="match status" value="1"/>
</dbReference>
<dbReference type="FunFam" id="1.10.1060.10:FF:000029">
    <property type="entry name" value="Succinate dehydrogenase [ubiquinone] iron-sulfur subunit, mitochondrial"/>
    <property type="match status" value="1"/>
</dbReference>
<dbReference type="FunFam" id="3.10.20.30:FF:000007">
    <property type="entry name" value="Succinate dehydrogenase [ubiquinone] iron-sulfur subunit, mitochondrial"/>
    <property type="match status" value="1"/>
</dbReference>
<dbReference type="Gene3D" id="3.10.20.30">
    <property type="match status" value="1"/>
</dbReference>
<dbReference type="Gene3D" id="1.10.1060.10">
    <property type="entry name" value="Alpha-helical ferredoxin"/>
    <property type="match status" value="1"/>
</dbReference>
<dbReference type="InterPro" id="IPR036010">
    <property type="entry name" value="2Fe-2S_ferredoxin-like_sf"/>
</dbReference>
<dbReference type="InterPro" id="IPR001041">
    <property type="entry name" value="2Fe-2S_ferredoxin-type"/>
</dbReference>
<dbReference type="InterPro" id="IPR006058">
    <property type="entry name" value="2Fe2S_fd_BS"/>
</dbReference>
<dbReference type="InterPro" id="IPR017896">
    <property type="entry name" value="4Fe4S_Fe-S-bd"/>
</dbReference>
<dbReference type="InterPro" id="IPR017900">
    <property type="entry name" value="4Fe4S_Fe_S_CS"/>
</dbReference>
<dbReference type="InterPro" id="IPR012675">
    <property type="entry name" value="Beta-grasp_dom_sf"/>
</dbReference>
<dbReference type="InterPro" id="IPR009051">
    <property type="entry name" value="Helical_ferredxn"/>
</dbReference>
<dbReference type="InterPro" id="IPR050573">
    <property type="entry name" value="SDH/FRD_Iron-Sulfur"/>
</dbReference>
<dbReference type="InterPro" id="IPR004489">
    <property type="entry name" value="Succ_DH/fum_Rdtase_Fe-S"/>
</dbReference>
<dbReference type="InterPro" id="IPR025192">
    <property type="entry name" value="Succ_DH/fum_Rdtase_N"/>
</dbReference>
<dbReference type="NCBIfam" id="TIGR00384">
    <property type="entry name" value="dhsB"/>
    <property type="match status" value="1"/>
</dbReference>
<dbReference type="NCBIfam" id="NF004616">
    <property type="entry name" value="PRK05950.1"/>
    <property type="match status" value="1"/>
</dbReference>
<dbReference type="PANTHER" id="PTHR11921:SF29">
    <property type="entry name" value="SUCCINATE DEHYDROGENASE [UBIQUINONE] IRON-SULFUR SUBUNIT, MITOCHONDRIAL"/>
    <property type="match status" value="1"/>
</dbReference>
<dbReference type="PANTHER" id="PTHR11921">
    <property type="entry name" value="SUCCINATE DEHYDROGENASE IRON-SULFUR PROTEIN"/>
    <property type="match status" value="1"/>
</dbReference>
<dbReference type="Pfam" id="PF13085">
    <property type="entry name" value="Fer2_3"/>
    <property type="match status" value="1"/>
</dbReference>
<dbReference type="Pfam" id="PF13534">
    <property type="entry name" value="Fer4_17"/>
    <property type="match status" value="1"/>
</dbReference>
<dbReference type="SUPFAM" id="SSF54292">
    <property type="entry name" value="2Fe-2S ferredoxin-like"/>
    <property type="match status" value="1"/>
</dbReference>
<dbReference type="SUPFAM" id="SSF46548">
    <property type="entry name" value="alpha-helical ferredoxin"/>
    <property type="match status" value="1"/>
</dbReference>
<dbReference type="PROSITE" id="PS00197">
    <property type="entry name" value="2FE2S_FER_1"/>
    <property type="match status" value="1"/>
</dbReference>
<dbReference type="PROSITE" id="PS51085">
    <property type="entry name" value="2FE2S_FER_2"/>
    <property type="match status" value="1"/>
</dbReference>
<dbReference type="PROSITE" id="PS00198">
    <property type="entry name" value="4FE4S_FER_1"/>
    <property type="match status" value="1"/>
</dbReference>
<dbReference type="PROSITE" id="PS51379">
    <property type="entry name" value="4FE4S_FER_2"/>
    <property type="match status" value="1"/>
</dbReference>
<accession>P21912</accession>
<accession>B2R545</accession>
<accession>Q0QEY7</accession>
<accession>Q9NQ12</accession>